<reference key="1">
    <citation type="journal article" date="1998" name="Nature">
        <title>Deciphering the biology of Mycobacterium tuberculosis from the complete genome sequence.</title>
        <authorList>
            <person name="Cole S.T."/>
            <person name="Brosch R."/>
            <person name="Parkhill J."/>
            <person name="Garnier T."/>
            <person name="Churcher C.M."/>
            <person name="Harris D.E."/>
            <person name="Gordon S.V."/>
            <person name="Eiglmeier K."/>
            <person name="Gas S."/>
            <person name="Barry C.E. III"/>
            <person name="Tekaia F."/>
            <person name="Badcock K."/>
            <person name="Basham D."/>
            <person name="Brown D."/>
            <person name="Chillingworth T."/>
            <person name="Connor R."/>
            <person name="Davies R.M."/>
            <person name="Devlin K."/>
            <person name="Feltwell T."/>
            <person name="Gentles S."/>
            <person name="Hamlin N."/>
            <person name="Holroyd S."/>
            <person name="Hornsby T."/>
            <person name="Jagels K."/>
            <person name="Krogh A."/>
            <person name="McLean J."/>
            <person name="Moule S."/>
            <person name="Murphy L.D."/>
            <person name="Oliver S."/>
            <person name="Osborne J."/>
            <person name="Quail M.A."/>
            <person name="Rajandream M.A."/>
            <person name="Rogers J."/>
            <person name="Rutter S."/>
            <person name="Seeger K."/>
            <person name="Skelton S."/>
            <person name="Squares S."/>
            <person name="Squares R."/>
            <person name="Sulston J.E."/>
            <person name="Taylor K."/>
            <person name="Whitehead S."/>
            <person name="Barrell B.G."/>
        </authorList>
    </citation>
    <scope>NUCLEOTIDE SEQUENCE [LARGE SCALE GENOMIC DNA]</scope>
    <source>
        <strain>ATCC 25618 / H37Rv</strain>
    </source>
</reference>
<name>Y2227_MYCTU</name>
<sequence length="233" mass="26614">MGQTRRLRRLGRHRCRGQRVRWRTATSADHPRRGRPAAQAVRRRRPVSLDGRYGIQAVRRRAVSIFPCPLSRVIERLKQALYPKLLPIARNWWAKLGREAPWPDSLDDWLASCHAAGQTRSTALMLKYGTNDWNALHQDLYGELVFPLQVVINLSDPETDYTGGEFLLVEQRPRAQSRGTAMQLPQGHGYVFTTRDRPVRTSRGWSASPVRHGLSTIRSGERYAMGLIFHDAA</sequence>
<dbReference type="EMBL" id="AL123456">
    <property type="protein sequence ID" value="CCP45005.1"/>
    <property type="molecule type" value="Genomic_DNA"/>
</dbReference>
<dbReference type="PIR" id="G70776">
    <property type="entry name" value="G70776"/>
</dbReference>
<dbReference type="RefSeq" id="NP_216743.1">
    <property type="nucleotide sequence ID" value="NC_000962.3"/>
</dbReference>
<dbReference type="RefSeq" id="WP_003899225.1">
    <property type="nucleotide sequence ID" value="NC_000962.3"/>
</dbReference>
<dbReference type="PaxDb" id="83332-Rv2227"/>
<dbReference type="DNASU" id="888581"/>
<dbReference type="GeneID" id="888581"/>
<dbReference type="KEGG" id="mtu:Rv2227"/>
<dbReference type="KEGG" id="mtv:RVBD_2227"/>
<dbReference type="TubercuList" id="Rv2227"/>
<dbReference type="eggNOG" id="COG3826">
    <property type="taxonomic scope" value="Bacteria"/>
</dbReference>
<dbReference type="InParanoid" id="P9WLH7"/>
<dbReference type="OrthoDB" id="9781972at2"/>
<dbReference type="PhylomeDB" id="P9WLH7"/>
<dbReference type="Proteomes" id="UP000001584">
    <property type="component" value="Chromosome"/>
</dbReference>
<dbReference type="Gene3D" id="2.60.120.620">
    <property type="entry name" value="q2cbj1_9rhob like domain"/>
    <property type="match status" value="1"/>
</dbReference>
<dbReference type="InterPro" id="IPR018655">
    <property type="entry name" value="DUF2086"/>
</dbReference>
<dbReference type="Pfam" id="PF09859">
    <property type="entry name" value="Oxygenase-NA"/>
    <property type="match status" value="1"/>
</dbReference>
<protein>
    <recommendedName>
        <fullName>Uncharacterized protein Rv2227</fullName>
    </recommendedName>
</protein>
<gene>
    <name type="ordered locus">Rv2227</name>
    <name type="ORF">MTCY427.08</name>
</gene>
<evidence type="ECO:0000256" key="1">
    <source>
        <dbReference type="SAM" id="MobiDB-lite"/>
    </source>
</evidence>
<organism>
    <name type="scientific">Mycobacterium tuberculosis (strain ATCC 25618 / H37Rv)</name>
    <dbReference type="NCBI Taxonomy" id="83332"/>
    <lineage>
        <taxon>Bacteria</taxon>
        <taxon>Bacillati</taxon>
        <taxon>Actinomycetota</taxon>
        <taxon>Actinomycetes</taxon>
        <taxon>Mycobacteriales</taxon>
        <taxon>Mycobacteriaceae</taxon>
        <taxon>Mycobacterium</taxon>
        <taxon>Mycobacterium tuberculosis complex</taxon>
    </lineage>
</organism>
<proteinExistence type="predicted"/>
<keyword id="KW-1185">Reference proteome</keyword>
<accession>P9WLH7</accession>
<accession>L0T973</accession>
<accession>Q10511</accession>
<feature type="chain" id="PRO_0000103980" description="Uncharacterized protein Rv2227">
    <location>
        <begin position="1"/>
        <end position="233"/>
    </location>
</feature>
<feature type="region of interest" description="Disordered" evidence="1">
    <location>
        <begin position="21"/>
        <end position="43"/>
    </location>
</feature>